<evidence type="ECO:0000250" key="1"/>
<evidence type="ECO:0000255" key="2"/>
<evidence type="ECO:0000305" key="3"/>
<proteinExistence type="evidence at transcript level"/>
<feature type="signal peptide" evidence="2">
    <location>
        <begin position="1"/>
        <end position="20"/>
    </location>
</feature>
<feature type="propeptide" id="PRO_0000401659" evidence="1">
    <location>
        <begin position="21"/>
        <end position="44"/>
    </location>
</feature>
<feature type="chain" id="PRO_0000401660" description="U3-lycotoxin-Ls1k">
    <location>
        <begin position="45"/>
        <end position="115"/>
    </location>
</feature>
<feature type="disulfide bond" evidence="1">
    <location>
        <begin position="48"/>
        <end position="63"/>
    </location>
</feature>
<feature type="disulfide bond" evidence="1">
    <location>
        <begin position="55"/>
        <end position="72"/>
    </location>
</feature>
<feature type="disulfide bond" evidence="1">
    <location>
        <begin position="62"/>
        <end position="87"/>
    </location>
</feature>
<feature type="disulfide bond" evidence="1">
    <location>
        <begin position="74"/>
        <end position="85"/>
    </location>
</feature>
<keyword id="KW-1015">Disulfide bond</keyword>
<keyword id="KW-0960">Knottin</keyword>
<keyword id="KW-0964">Secreted</keyword>
<keyword id="KW-0732">Signal</keyword>
<keyword id="KW-0800">Toxin</keyword>
<sequence>MKFVLLFGVLVVTLFSYSSAEMLDDFDQADEDELLSLIEKEEARAKECTPRFYDCSHDRHSCCRSELFKDVCTCFYPEGGDNEVCTCQQPKHLKYMEKAAGKAKKFGGKIKKWFG</sequence>
<comment type="subcellular location">
    <subcellularLocation>
        <location evidence="1">Secreted</location>
    </subcellularLocation>
</comment>
<comment type="tissue specificity">
    <text>Expressed by the venom gland.</text>
</comment>
<comment type="domain">
    <text evidence="1">The presence of a 'disulfide through disulfide knot' structurally defines this protein as a knottin.</text>
</comment>
<comment type="similarity">
    <text evidence="3">Belongs to the neurotoxin 19 (CSTX) family. 01 subfamily.</text>
</comment>
<accession>B6DCS3</accession>
<protein>
    <recommendedName>
        <fullName>U3-lycotoxin-Ls1k</fullName>
    </recommendedName>
    <alternativeName>
        <fullName>Toxin-like structure LSTX-B28</fullName>
    </alternativeName>
</protein>
<name>TX328_LYCSI</name>
<dbReference type="EMBL" id="EU926007">
    <property type="protein sequence ID" value="ACI41339.1"/>
    <property type="molecule type" value="mRNA"/>
</dbReference>
<dbReference type="EMBL" id="FM864011">
    <property type="protein sequence ID" value="CAS03609.1"/>
    <property type="molecule type" value="mRNA"/>
</dbReference>
<dbReference type="SMR" id="B6DCS3"/>
<dbReference type="ArachnoServer" id="AS000953">
    <property type="toxin name" value="U3-lycotoxin-Ls1k"/>
</dbReference>
<dbReference type="GO" id="GO:0005576">
    <property type="term" value="C:extracellular region"/>
    <property type="evidence" value="ECO:0007669"/>
    <property type="project" value="UniProtKB-SubCell"/>
</dbReference>
<dbReference type="GO" id="GO:0090729">
    <property type="term" value="F:toxin activity"/>
    <property type="evidence" value="ECO:0007669"/>
    <property type="project" value="UniProtKB-KW"/>
</dbReference>
<dbReference type="InterPro" id="IPR019553">
    <property type="entry name" value="Spider_toxin_CSTX_knottin"/>
</dbReference>
<dbReference type="InterPro" id="IPR011142">
    <property type="entry name" value="Spider_toxin_CSTX_Knottin_CS"/>
</dbReference>
<dbReference type="Pfam" id="PF10530">
    <property type="entry name" value="Toxin_35"/>
    <property type="match status" value="1"/>
</dbReference>
<dbReference type="PROSITE" id="PS60029">
    <property type="entry name" value="SPIDER_CSTX"/>
    <property type="match status" value="1"/>
</dbReference>
<reference key="1">
    <citation type="journal article" date="2010" name="Zoology">
        <title>Transcriptome analysis of the venom glands of the Chinese wolf spider Lycosa singoriensis.</title>
        <authorList>
            <person name="Zhang Y."/>
            <person name="Chen J."/>
            <person name="Tang X."/>
            <person name="Wang F."/>
            <person name="Jiang L."/>
            <person name="Xiong X."/>
            <person name="Wang M."/>
            <person name="Rong M."/>
            <person name="Liu Z."/>
            <person name="Liang S."/>
        </authorList>
    </citation>
    <scope>NUCLEOTIDE SEQUENCE [LARGE SCALE MRNA]</scope>
    <source>
        <tissue>Venom gland</tissue>
    </source>
</reference>
<organism>
    <name type="scientific">Lycosa singoriensis</name>
    <name type="common">Wolf spider</name>
    <name type="synonym">Aranea singoriensis</name>
    <dbReference type="NCBI Taxonomy" id="434756"/>
    <lineage>
        <taxon>Eukaryota</taxon>
        <taxon>Metazoa</taxon>
        <taxon>Ecdysozoa</taxon>
        <taxon>Arthropoda</taxon>
        <taxon>Chelicerata</taxon>
        <taxon>Arachnida</taxon>
        <taxon>Araneae</taxon>
        <taxon>Araneomorphae</taxon>
        <taxon>Entelegynae</taxon>
        <taxon>Lycosoidea</taxon>
        <taxon>Lycosidae</taxon>
        <taxon>Lycosa</taxon>
    </lineage>
</organism>